<sequence>MNHSRSHALFAQAQTLLPGGVNSPVRAFKSVGGEPFFVARADGPYLFDVDDNRYIDYVGSWGPMIAGHNHPAVREAVEQSIRNGLSFGAPCAAEVAMAQTITRLVPSCEMVRMVNSGTEATLSAVRLARGATGRNRIIKFEGCYHGHGDSFLVKAGSGMLTLGVPTSPGVPAGLSELTATLSFNDFEGATALFDEIGAEVAAVIIEPVVGNANCIPPQAGYLQHLRTLCTRHGALLIFDEVMTGFRVALGGAQAHYGVTPDLTTFGKIIGGGMPVGAYGGRRDLMEQVAPAGPIYQAGTLSGNPVAMAAGLAMLELVQEPGFHTRLSEATSMLCEGLEDAARAAGIAVTTNQVGGMFGLFFTDDIVESYAQATACDITTFNRFFHAMLQQGVYLAPSAYEAGFMSSAHDEAVIDATLAAAREAFAEVAR</sequence>
<keyword id="KW-0963">Cytoplasm</keyword>
<keyword id="KW-0413">Isomerase</keyword>
<keyword id="KW-0627">Porphyrin biosynthesis</keyword>
<keyword id="KW-0663">Pyridoxal phosphate</keyword>
<gene>
    <name evidence="1" type="primary">hemL</name>
    <name type="ordered locus">XAC3420</name>
</gene>
<evidence type="ECO:0000255" key="1">
    <source>
        <dbReference type="HAMAP-Rule" id="MF_00375"/>
    </source>
</evidence>
<reference key="1">
    <citation type="journal article" date="2002" name="Nature">
        <title>Comparison of the genomes of two Xanthomonas pathogens with differing host specificities.</title>
        <authorList>
            <person name="da Silva A.C.R."/>
            <person name="Ferro J.A."/>
            <person name="Reinach F.C."/>
            <person name="Farah C.S."/>
            <person name="Furlan L.R."/>
            <person name="Quaggio R.B."/>
            <person name="Monteiro-Vitorello C.B."/>
            <person name="Van Sluys M.A."/>
            <person name="Almeida N.F. Jr."/>
            <person name="Alves L.M.C."/>
            <person name="do Amaral A.M."/>
            <person name="Bertolini M.C."/>
            <person name="Camargo L.E.A."/>
            <person name="Camarotte G."/>
            <person name="Cannavan F."/>
            <person name="Cardozo J."/>
            <person name="Chambergo F."/>
            <person name="Ciapina L.P."/>
            <person name="Cicarelli R.M.B."/>
            <person name="Coutinho L.L."/>
            <person name="Cursino-Santos J.R."/>
            <person name="El-Dorry H."/>
            <person name="Faria J.B."/>
            <person name="Ferreira A.J.S."/>
            <person name="Ferreira R.C.C."/>
            <person name="Ferro M.I.T."/>
            <person name="Formighieri E.F."/>
            <person name="Franco M.C."/>
            <person name="Greggio C.C."/>
            <person name="Gruber A."/>
            <person name="Katsuyama A.M."/>
            <person name="Kishi L.T."/>
            <person name="Leite R.P."/>
            <person name="Lemos E.G.M."/>
            <person name="Lemos M.V.F."/>
            <person name="Locali E.C."/>
            <person name="Machado M.A."/>
            <person name="Madeira A.M.B.N."/>
            <person name="Martinez-Rossi N.M."/>
            <person name="Martins E.C."/>
            <person name="Meidanis J."/>
            <person name="Menck C.F.M."/>
            <person name="Miyaki C.Y."/>
            <person name="Moon D.H."/>
            <person name="Moreira L.M."/>
            <person name="Novo M.T.M."/>
            <person name="Okura V.K."/>
            <person name="Oliveira M.C."/>
            <person name="Oliveira V.R."/>
            <person name="Pereira H.A."/>
            <person name="Rossi A."/>
            <person name="Sena J.A.D."/>
            <person name="Silva C."/>
            <person name="de Souza R.F."/>
            <person name="Spinola L.A.F."/>
            <person name="Takita M.A."/>
            <person name="Tamura R.E."/>
            <person name="Teixeira E.C."/>
            <person name="Tezza R.I.D."/>
            <person name="Trindade dos Santos M."/>
            <person name="Truffi D."/>
            <person name="Tsai S.M."/>
            <person name="White F.F."/>
            <person name="Setubal J.C."/>
            <person name="Kitajima J.P."/>
        </authorList>
    </citation>
    <scope>NUCLEOTIDE SEQUENCE [LARGE SCALE GENOMIC DNA]</scope>
    <source>
        <strain>306</strain>
    </source>
</reference>
<comment type="catalytic activity">
    <reaction evidence="1">
        <text>(S)-4-amino-5-oxopentanoate = 5-aminolevulinate</text>
        <dbReference type="Rhea" id="RHEA:14265"/>
        <dbReference type="ChEBI" id="CHEBI:57501"/>
        <dbReference type="ChEBI" id="CHEBI:356416"/>
        <dbReference type="EC" id="5.4.3.8"/>
    </reaction>
</comment>
<comment type="cofactor">
    <cofactor evidence="1">
        <name>pyridoxal 5'-phosphate</name>
        <dbReference type="ChEBI" id="CHEBI:597326"/>
    </cofactor>
</comment>
<comment type="pathway">
    <text evidence="1">Porphyrin-containing compound metabolism; protoporphyrin-IX biosynthesis; 5-aminolevulinate from L-glutamyl-tRNA(Glu): step 2/2.</text>
</comment>
<comment type="subunit">
    <text evidence="1">Homodimer.</text>
</comment>
<comment type="subcellular location">
    <subcellularLocation>
        <location evidence="1">Cytoplasm</location>
    </subcellularLocation>
</comment>
<comment type="similarity">
    <text evidence="1">Belongs to the class-III pyridoxal-phosphate-dependent aminotransferase family. HemL subfamily.</text>
</comment>
<dbReference type="EC" id="5.4.3.8" evidence="1"/>
<dbReference type="EMBL" id="AE008923">
    <property type="protein sequence ID" value="AAM38263.1"/>
    <property type="molecule type" value="Genomic_DNA"/>
</dbReference>
<dbReference type="RefSeq" id="WP_011052264.1">
    <property type="nucleotide sequence ID" value="NC_003919.1"/>
</dbReference>
<dbReference type="SMR" id="Q8PH40"/>
<dbReference type="GeneID" id="66912463"/>
<dbReference type="KEGG" id="xac:XAC3420"/>
<dbReference type="eggNOG" id="COG0001">
    <property type="taxonomic scope" value="Bacteria"/>
</dbReference>
<dbReference type="HOGENOM" id="CLU_016922_1_5_6"/>
<dbReference type="UniPathway" id="UPA00251">
    <property type="reaction ID" value="UER00317"/>
</dbReference>
<dbReference type="Proteomes" id="UP000000576">
    <property type="component" value="Chromosome"/>
</dbReference>
<dbReference type="GO" id="GO:0005737">
    <property type="term" value="C:cytoplasm"/>
    <property type="evidence" value="ECO:0007669"/>
    <property type="project" value="UniProtKB-SubCell"/>
</dbReference>
<dbReference type="GO" id="GO:0042286">
    <property type="term" value="F:glutamate-1-semialdehyde 2,1-aminomutase activity"/>
    <property type="evidence" value="ECO:0007669"/>
    <property type="project" value="UniProtKB-UniRule"/>
</dbReference>
<dbReference type="GO" id="GO:0030170">
    <property type="term" value="F:pyridoxal phosphate binding"/>
    <property type="evidence" value="ECO:0007669"/>
    <property type="project" value="InterPro"/>
</dbReference>
<dbReference type="GO" id="GO:0008483">
    <property type="term" value="F:transaminase activity"/>
    <property type="evidence" value="ECO:0007669"/>
    <property type="project" value="InterPro"/>
</dbReference>
<dbReference type="GO" id="GO:0006782">
    <property type="term" value="P:protoporphyrinogen IX biosynthetic process"/>
    <property type="evidence" value="ECO:0007669"/>
    <property type="project" value="UniProtKB-UniRule"/>
</dbReference>
<dbReference type="CDD" id="cd00610">
    <property type="entry name" value="OAT_like"/>
    <property type="match status" value="1"/>
</dbReference>
<dbReference type="FunFam" id="3.40.640.10:FF:000021">
    <property type="entry name" value="Glutamate-1-semialdehyde 2,1-aminomutase"/>
    <property type="match status" value="1"/>
</dbReference>
<dbReference type="Gene3D" id="3.90.1150.10">
    <property type="entry name" value="Aspartate Aminotransferase, domain 1"/>
    <property type="match status" value="1"/>
</dbReference>
<dbReference type="Gene3D" id="3.40.640.10">
    <property type="entry name" value="Type I PLP-dependent aspartate aminotransferase-like (Major domain)"/>
    <property type="match status" value="1"/>
</dbReference>
<dbReference type="HAMAP" id="MF_00375">
    <property type="entry name" value="HemL_aminotrans_3"/>
    <property type="match status" value="1"/>
</dbReference>
<dbReference type="InterPro" id="IPR004639">
    <property type="entry name" value="4pyrrol_synth_GluAld_NH2Trfase"/>
</dbReference>
<dbReference type="InterPro" id="IPR005814">
    <property type="entry name" value="Aminotrans_3"/>
</dbReference>
<dbReference type="InterPro" id="IPR049704">
    <property type="entry name" value="Aminotrans_3_PPA_site"/>
</dbReference>
<dbReference type="InterPro" id="IPR015424">
    <property type="entry name" value="PyrdxlP-dep_Trfase"/>
</dbReference>
<dbReference type="InterPro" id="IPR015421">
    <property type="entry name" value="PyrdxlP-dep_Trfase_major"/>
</dbReference>
<dbReference type="InterPro" id="IPR015422">
    <property type="entry name" value="PyrdxlP-dep_Trfase_small"/>
</dbReference>
<dbReference type="NCBIfam" id="TIGR00713">
    <property type="entry name" value="hemL"/>
    <property type="match status" value="1"/>
</dbReference>
<dbReference type="NCBIfam" id="NF000818">
    <property type="entry name" value="PRK00062.1"/>
    <property type="match status" value="1"/>
</dbReference>
<dbReference type="PANTHER" id="PTHR43713">
    <property type="entry name" value="GLUTAMATE-1-SEMIALDEHYDE 2,1-AMINOMUTASE"/>
    <property type="match status" value="1"/>
</dbReference>
<dbReference type="PANTHER" id="PTHR43713:SF3">
    <property type="entry name" value="GLUTAMATE-1-SEMIALDEHYDE 2,1-AMINOMUTASE 1, CHLOROPLASTIC-RELATED"/>
    <property type="match status" value="1"/>
</dbReference>
<dbReference type="Pfam" id="PF00202">
    <property type="entry name" value="Aminotran_3"/>
    <property type="match status" value="1"/>
</dbReference>
<dbReference type="SUPFAM" id="SSF53383">
    <property type="entry name" value="PLP-dependent transferases"/>
    <property type="match status" value="1"/>
</dbReference>
<dbReference type="PROSITE" id="PS00600">
    <property type="entry name" value="AA_TRANSFER_CLASS_3"/>
    <property type="match status" value="1"/>
</dbReference>
<accession>Q8PH40</accession>
<name>GSA_XANAC</name>
<proteinExistence type="inferred from homology"/>
<organism>
    <name type="scientific">Xanthomonas axonopodis pv. citri (strain 306)</name>
    <dbReference type="NCBI Taxonomy" id="190486"/>
    <lineage>
        <taxon>Bacteria</taxon>
        <taxon>Pseudomonadati</taxon>
        <taxon>Pseudomonadota</taxon>
        <taxon>Gammaproteobacteria</taxon>
        <taxon>Lysobacterales</taxon>
        <taxon>Lysobacteraceae</taxon>
        <taxon>Xanthomonas</taxon>
    </lineage>
</organism>
<feature type="chain" id="PRO_0000120469" description="Glutamate-1-semialdehyde 2,1-aminomutase">
    <location>
        <begin position="1"/>
        <end position="429"/>
    </location>
</feature>
<feature type="modified residue" description="N6-(pyridoxal phosphate)lysine" evidence="1">
    <location>
        <position position="267"/>
    </location>
</feature>
<protein>
    <recommendedName>
        <fullName evidence="1">Glutamate-1-semialdehyde 2,1-aminomutase</fullName>
        <shortName evidence="1">GSA</shortName>
        <ecNumber evidence="1">5.4.3.8</ecNumber>
    </recommendedName>
    <alternativeName>
        <fullName evidence="1">Glutamate-1-semialdehyde aminotransferase</fullName>
        <shortName evidence="1">GSA-AT</shortName>
    </alternativeName>
</protein>